<accession>B0BUJ1</accession>
<proteinExistence type="inferred from homology"/>
<sequence length="44" mass="5193">MKRTFQPSNLVRKRRHGFRSRMATPTGRAILRKRRAKGRNKLSA</sequence>
<organism>
    <name type="scientific">Rickettsia rickettsii (strain Iowa)</name>
    <dbReference type="NCBI Taxonomy" id="452659"/>
    <lineage>
        <taxon>Bacteria</taxon>
        <taxon>Pseudomonadati</taxon>
        <taxon>Pseudomonadota</taxon>
        <taxon>Alphaproteobacteria</taxon>
        <taxon>Rickettsiales</taxon>
        <taxon>Rickettsiaceae</taxon>
        <taxon>Rickettsieae</taxon>
        <taxon>Rickettsia</taxon>
        <taxon>spotted fever group</taxon>
    </lineage>
</organism>
<name>RL34_RICRO</name>
<evidence type="ECO:0000255" key="1">
    <source>
        <dbReference type="HAMAP-Rule" id="MF_00391"/>
    </source>
</evidence>
<evidence type="ECO:0000256" key="2">
    <source>
        <dbReference type="SAM" id="MobiDB-lite"/>
    </source>
</evidence>
<evidence type="ECO:0000305" key="3"/>
<reference key="1">
    <citation type="journal article" date="2008" name="Infect. Immun.">
        <title>Genomic comparison of virulent Rickettsia rickettsii Sheila Smith and avirulent Rickettsia rickettsii Iowa.</title>
        <authorList>
            <person name="Ellison D.W."/>
            <person name="Clark T.R."/>
            <person name="Sturdevant D.E."/>
            <person name="Virtaneva K."/>
            <person name="Porcella S.F."/>
            <person name="Hackstadt T."/>
        </authorList>
    </citation>
    <scope>NUCLEOTIDE SEQUENCE [LARGE SCALE GENOMIC DNA]</scope>
    <source>
        <strain>Iowa</strain>
    </source>
</reference>
<comment type="similarity">
    <text evidence="1">Belongs to the bacterial ribosomal protein bL34 family.</text>
</comment>
<keyword id="KW-0687">Ribonucleoprotein</keyword>
<keyword id="KW-0689">Ribosomal protein</keyword>
<feature type="chain" id="PRO_1000080262" description="Large ribosomal subunit protein bL34">
    <location>
        <begin position="1"/>
        <end position="44"/>
    </location>
</feature>
<feature type="region of interest" description="Disordered" evidence="2">
    <location>
        <begin position="15"/>
        <end position="44"/>
    </location>
</feature>
<feature type="compositionally biased region" description="Basic residues" evidence="2">
    <location>
        <begin position="30"/>
        <end position="44"/>
    </location>
</feature>
<protein>
    <recommendedName>
        <fullName evidence="1">Large ribosomal subunit protein bL34</fullName>
    </recommendedName>
    <alternativeName>
        <fullName evidence="3">50S ribosomal protein L34</fullName>
    </alternativeName>
</protein>
<gene>
    <name evidence="1" type="primary">rpmH</name>
    <name type="ordered locus">RrIowa_1111</name>
</gene>
<dbReference type="EMBL" id="CP000766">
    <property type="protein sequence ID" value="ABY72901.1"/>
    <property type="molecule type" value="Genomic_DNA"/>
</dbReference>
<dbReference type="RefSeq" id="WP_004997918.1">
    <property type="nucleotide sequence ID" value="NC_010263.3"/>
</dbReference>
<dbReference type="SMR" id="B0BUJ1"/>
<dbReference type="GeneID" id="95361429"/>
<dbReference type="KEGG" id="rrj:RrIowa_1111"/>
<dbReference type="eggNOG" id="COG0230">
    <property type="taxonomic scope" value="Bacteria"/>
</dbReference>
<dbReference type="HOGENOM" id="CLU_129938_2_0_5"/>
<dbReference type="Proteomes" id="UP000000796">
    <property type="component" value="Chromosome"/>
</dbReference>
<dbReference type="GO" id="GO:1990904">
    <property type="term" value="C:ribonucleoprotein complex"/>
    <property type="evidence" value="ECO:0007669"/>
    <property type="project" value="UniProtKB-KW"/>
</dbReference>
<dbReference type="GO" id="GO:0005840">
    <property type="term" value="C:ribosome"/>
    <property type="evidence" value="ECO:0007669"/>
    <property type="project" value="UniProtKB-KW"/>
</dbReference>
<dbReference type="GO" id="GO:0003735">
    <property type="term" value="F:structural constituent of ribosome"/>
    <property type="evidence" value="ECO:0007669"/>
    <property type="project" value="InterPro"/>
</dbReference>
<dbReference type="GO" id="GO:0006412">
    <property type="term" value="P:translation"/>
    <property type="evidence" value="ECO:0007669"/>
    <property type="project" value="UniProtKB-UniRule"/>
</dbReference>
<dbReference type="FunFam" id="1.10.287.3980:FF:000001">
    <property type="entry name" value="Mitochondrial ribosomal protein L34"/>
    <property type="match status" value="1"/>
</dbReference>
<dbReference type="Gene3D" id="1.10.287.3980">
    <property type="match status" value="1"/>
</dbReference>
<dbReference type="HAMAP" id="MF_00391">
    <property type="entry name" value="Ribosomal_bL34"/>
    <property type="match status" value="1"/>
</dbReference>
<dbReference type="InterPro" id="IPR000271">
    <property type="entry name" value="Ribosomal_bL34"/>
</dbReference>
<dbReference type="InterPro" id="IPR020939">
    <property type="entry name" value="Ribosomal_bL34_CS"/>
</dbReference>
<dbReference type="NCBIfam" id="TIGR01030">
    <property type="entry name" value="rpmH_bact"/>
    <property type="match status" value="1"/>
</dbReference>
<dbReference type="PANTHER" id="PTHR14503:SF4">
    <property type="entry name" value="LARGE RIBOSOMAL SUBUNIT PROTEIN BL34M"/>
    <property type="match status" value="1"/>
</dbReference>
<dbReference type="PANTHER" id="PTHR14503">
    <property type="entry name" value="MITOCHONDRIAL RIBOSOMAL PROTEIN 34 FAMILY MEMBER"/>
    <property type="match status" value="1"/>
</dbReference>
<dbReference type="Pfam" id="PF00468">
    <property type="entry name" value="Ribosomal_L34"/>
    <property type="match status" value="1"/>
</dbReference>
<dbReference type="PROSITE" id="PS00784">
    <property type="entry name" value="RIBOSOMAL_L34"/>
    <property type="match status" value="1"/>
</dbReference>